<dbReference type="EMBL" id="AE000520">
    <property type="protein sequence ID" value="AAC65901.1"/>
    <property type="molecule type" value="Genomic_DNA"/>
</dbReference>
<dbReference type="PIR" id="B71263">
    <property type="entry name" value="B71263"/>
</dbReference>
<dbReference type="RefSeq" id="WP_010882385.1">
    <property type="nucleotide sequence ID" value="NC_021490.2"/>
</dbReference>
<dbReference type="SMR" id="O83912"/>
<dbReference type="IntAct" id="O83912">
    <property type="interactions" value="1"/>
</dbReference>
<dbReference type="STRING" id="243276.TP_0942"/>
<dbReference type="EnsemblBacteria" id="AAC65901">
    <property type="protein sequence ID" value="AAC65901"/>
    <property type="gene ID" value="TP_0942"/>
</dbReference>
<dbReference type="KEGG" id="tpa:TP_0942"/>
<dbReference type="KEGG" id="tpw:TPANIC_0942"/>
<dbReference type="eggNOG" id="ENOG50343Q9">
    <property type="taxonomic scope" value="Bacteria"/>
</dbReference>
<dbReference type="HOGENOM" id="CLU_1677080_0_0_12"/>
<dbReference type="Proteomes" id="UP000000811">
    <property type="component" value="Chromosome"/>
</dbReference>
<dbReference type="GO" id="GO:0044780">
    <property type="term" value="P:bacterial-type flagellum assembly"/>
    <property type="evidence" value="ECO:0007669"/>
    <property type="project" value="InterPro"/>
</dbReference>
<dbReference type="InterPro" id="IPR036679">
    <property type="entry name" value="FlgN-like_sf"/>
</dbReference>
<dbReference type="SUPFAM" id="SSF140566">
    <property type="entry name" value="FlgN-like"/>
    <property type="match status" value="1"/>
</dbReference>
<sequence>MDGARVSDEEVARRVATLKRLKALLQEQREKFAQYLVVLQQQQVAIEAQDAETVLRHVELEEALLGDVQRVQKALAPMEQLCLQQASGVQELAQLRCDLSRVQEQVYAQNEKNRALLRAQVSDLRQQLDEFRAARGLVSYEDGEDSGTVIDLSL</sequence>
<proteinExistence type="predicted"/>
<name>Y942_TREPA</name>
<keyword id="KW-0175">Coiled coil</keyword>
<keyword id="KW-1185">Reference proteome</keyword>
<reference key="1">
    <citation type="journal article" date="1998" name="Science">
        <title>Complete genome sequence of Treponema pallidum, the syphilis spirochete.</title>
        <authorList>
            <person name="Fraser C.M."/>
            <person name="Norris S.J."/>
            <person name="Weinstock G.M."/>
            <person name="White O."/>
            <person name="Sutton G.G."/>
            <person name="Dodson R.J."/>
            <person name="Gwinn M.L."/>
            <person name="Hickey E.K."/>
            <person name="Clayton R.A."/>
            <person name="Ketchum K.A."/>
            <person name="Sodergren E."/>
            <person name="Hardham J.M."/>
            <person name="McLeod M.P."/>
            <person name="Salzberg S.L."/>
            <person name="Peterson J.D."/>
            <person name="Khalak H.G."/>
            <person name="Richardson D.L."/>
            <person name="Howell J.K."/>
            <person name="Chidambaram M."/>
            <person name="Utterback T.R."/>
            <person name="McDonald L.A."/>
            <person name="Artiach P."/>
            <person name="Bowman C."/>
            <person name="Cotton M.D."/>
            <person name="Fujii C."/>
            <person name="Garland S.A."/>
            <person name="Hatch B."/>
            <person name="Horst K."/>
            <person name="Roberts K.M."/>
            <person name="Sandusky M."/>
            <person name="Weidman J.F."/>
            <person name="Smith H.O."/>
            <person name="Venter J.C."/>
        </authorList>
    </citation>
    <scope>NUCLEOTIDE SEQUENCE [LARGE SCALE GENOMIC DNA]</scope>
    <source>
        <strain>Nichols</strain>
    </source>
</reference>
<organism>
    <name type="scientific">Treponema pallidum (strain Nichols)</name>
    <dbReference type="NCBI Taxonomy" id="243276"/>
    <lineage>
        <taxon>Bacteria</taxon>
        <taxon>Pseudomonadati</taxon>
        <taxon>Spirochaetota</taxon>
        <taxon>Spirochaetia</taxon>
        <taxon>Spirochaetales</taxon>
        <taxon>Treponemataceae</taxon>
        <taxon>Treponema</taxon>
    </lineage>
</organism>
<protein>
    <recommendedName>
        <fullName>Uncharacterized protein TP_0942</fullName>
    </recommendedName>
</protein>
<evidence type="ECO:0000255" key="1"/>
<accession>O83912</accession>
<feature type="chain" id="PRO_0000202360" description="Uncharacterized protein TP_0942">
    <location>
        <begin position="1"/>
        <end position="154"/>
    </location>
</feature>
<feature type="coiled-coil region" evidence="1">
    <location>
        <begin position="8"/>
        <end position="48"/>
    </location>
</feature>
<feature type="coiled-coil region" evidence="1">
    <location>
        <begin position="89"/>
        <end position="138"/>
    </location>
</feature>
<gene>
    <name type="ordered locus">TP_0942</name>
</gene>